<protein>
    <recommendedName>
        <fullName evidence="2">Probable diguanylate cyclase DgcQ</fullName>
        <shortName evidence="2">DGC</shortName>
        <ecNumber evidence="2">2.7.7.65</ecNumber>
    </recommendedName>
    <alternativeName>
        <fullName evidence="2">Cellulose synthesis regulatory protein</fullName>
    </alternativeName>
</protein>
<evidence type="ECO:0000250" key="1">
    <source>
        <dbReference type="UniProtKB" id="P31129"/>
    </source>
</evidence>
<evidence type="ECO:0000250" key="2">
    <source>
        <dbReference type="UniProtKB" id="P76330"/>
    </source>
</evidence>
<evidence type="ECO:0000255" key="3"/>
<evidence type="ECO:0000255" key="4">
    <source>
        <dbReference type="PROSITE-ProRule" id="PRU00095"/>
    </source>
</evidence>
<evidence type="ECO:0000305" key="5"/>
<name>DGCQ_SHISS</name>
<feature type="chain" id="PRO_0000248038" description="Probable diguanylate cyclase DgcQ">
    <location>
        <begin position="1"/>
        <end position="569"/>
    </location>
</feature>
<feature type="transmembrane region" description="Helical" evidence="3">
    <location>
        <begin position="25"/>
        <end position="45"/>
    </location>
</feature>
<feature type="transmembrane region" description="Helical" evidence="3">
    <location>
        <begin position="365"/>
        <end position="385"/>
    </location>
</feature>
<feature type="domain" description="GGDEF" evidence="4">
    <location>
        <begin position="433"/>
        <end position="568"/>
    </location>
</feature>
<feature type="active site" description="Proton acceptor" evidence="3">
    <location>
        <position position="484"/>
    </location>
</feature>
<feature type="binding site" evidence="1">
    <location>
        <position position="441"/>
    </location>
    <ligand>
        <name>Mg(2+)</name>
        <dbReference type="ChEBI" id="CHEBI:18420"/>
    </ligand>
</feature>
<feature type="binding site" evidence="1">
    <location>
        <position position="449"/>
    </location>
    <ligand>
        <name>substrate</name>
    </ligand>
</feature>
<feature type="binding site" evidence="1">
    <location>
        <position position="454"/>
    </location>
    <ligand>
        <name>substrate</name>
    </ligand>
</feature>
<feature type="binding site" evidence="1">
    <location>
        <position position="458"/>
    </location>
    <ligand>
        <name>substrate</name>
    </ligand>
</feature>
<feature type="binding site" evidence="1">
    <location>
        <position position="484"/>
    </location>
    <ligand>
        <name>Mg(2+)</name>
        <dbReference type="ChEBI" id="CHEBI:18420"/>
    </ligand>
</feature>
<feature type="site" description="Transition state stabilizer" evidence="3">
    <location>
        <position position="446"/>
    </location>
</feature>
<reference key="1">
    <citation type="journal article" date="2005" name="Nucleic Acids Res.">
        <title>Genome dynamics and diversity of Shigella species, the etiologic agents of bacillary dysentery.</title>
        <authorList>
            <person name="Yang F."/>
            <person name="Yang J."/>
            <person name="Zhang X."/>
            <person name="Chen L."/>
            <person name="Jiang Y."/>
            <person name="Yan Y."/>
            <person name="Tang X."/>
            <person name="Wang J."/>
            <person name="Xiong Z."/>
            <person name="Dong J."/>
            <person name="Xue Y."/>
            <person name="Zhu Y."/>
            <person name="Xu X."/>
            <person name="Sun L."/>
            <person name="Chen S."/>
            <person name="Nie H."/>
            <person name="Peng J."/>
            <person name="Xu J."/>
            <person name="Wang Y."/>
            <person name="Yuan Z."/>
            <person name="Wen Y."/>
            <person name="Yao Z."/>
            <person name="Shen Y."/>
            <person name="Qiang B."/>
            <person name="Hou Y."/>
            <person name="Yu J."/>
            <person name="Jin Q."/>
        </authorList>
    </citation>
    <scope>NUCLEOTIDE SEQUENCE [LARGE SCALE GENOMIC DNA]</scope>
    <source>
        <strain>Ss046</strain>
    </source>
</reference>
<proteinExistence type="inferred from homology"/>
<sequence length="569" mass="64752">MGVVRVQHETKMENQSWLKKLARRLGPGHVVNLCFIVVLLFSTLLTWREVVVLEDAYISSQRNHLENVANALDKHLQYNVDKLIFLRNGMREALVAPLDFTSLRNAVTEFEQHRDEHAWQIELNRRRTLSVNGVSDALVSEGNLLSRENESLDNEITAALEVGYLLRLAHNTSSMVEQAMYVSRAGFYVSTQPTLFTRNVPTRYYGYVTQPWFIGHSQRENRHRAVRWFTSQPEHASNTEPQVTVSVPVDSNNYWYGVLGMSIPVRTMQQFLRNAIDKNLDGEYQLYDSKLRFLTSSNPDHPTGNIFDPRELALLAQAMEHDTRGGIRMDSRYVSWERLDHFDGVLVRVHTLSEGVRGDFGSISIALTLLWALFTTMLLISWYVIRRMVSNMYVLQSSLQWQAWHDTLTRLYNRGALFEKARPLAKLCQTHQHPFSVIQVDLDHFKAINDRFGHQAGDRVLSHAAGLISSSLRAQDVAGRVGGEEFCVILPGASLTEAAEVAERIRLKLNEKEMLIAKSTTIRISASLGVSSSEETGDYDFEQLQSLADRRLYLAKQAGRNRVCASDNA</sequence>
<comment type="function">
    <text evidence="1 2">Catalyzes the synthesis of cyclic-di-GMP (c-di-GMP) via the condensation of 2 GTP molecules (By similarity). Cyclic-di-GMP is a second messenger which controls cell surface-associated traits in bacteria. Involved in the regulation of cellulose production (By similarity).</text>
</comment>
<comment type="catalytic activity">
    <reaction evidence="1">
        <text>2 GTP = 3',3'-c-di-GMP + 2 diphosphate</text>
        <dbReference type="Rhea" id="RHEA:24898"/>
        <dbReference type="ChEBI" id="CHEBI:33019"/>
        <dbReference type="ChEBI" id="CHEBI:37565"/>
        <dbReference type="ChEBI" id="CHEBI:58805"/>
        <dbReference type="EC" id="2.7.7.65"/>
    </reaction>
</comment>
<comment type="cofactor">
    <cofactor evidence="1">
        <name>Mg(2+)</name>
        <dbReference type="ChEBI" id="CHEBI:18420"/>
    </cofactor>
    <text evidence="1">Binds 1 Mg(2+) ion per monomer.</text>
</comment>
<comment type="pathway">
    <text evidence="2">Glycan metabolism; bacterial cellulose biosynthesis.</text>
</comment>
<comment type="pathway">
    <text evidence="2">Purine metabolism; 3',5'-cyclic di-GMP biosynthesis.</text>
</comment>
<comment type="subunit">
    <text evidence="1">Homodimer.</text>
</comment>
<comment type="subcellular location">
    <subcellularLocation>
        <location evidence="5">Cell inner membrane</location>
        <topology evidence="3">Multi-pass membrane protein</topology>
    </subcellularLocation>
</comment>
<dbReference type="EC" id="2.7.7.65" evidence="2"/>
<dbReference type="EMBL" id="CP000038">
    <property type="protein sequence ID" value="AAZ88679.1"/>
    <property type="molecule type" value="Genomic_DNA"/>
</dbReference>
<dbReference type="SMR" id="Q3Z0N3"/>
<dbReference type="KEGG" id="ssn:SSON_2013"/>
<dbReference type="HOGENOM" id="CLU_000445_11_23_6"/>
<dbReference type="UniPathway" id="UPA00599"/>
<dbReference type="UniPathway" id="UPA00694"/>
<dbReference type="Proteomes" id="UP000002529">
    <property type="component" value="Chromosome"/>
</dbReference>
<dbReference type="GO" id="GO:0005886">
    <property type="term" value="C:plasma membrane"/>
    <property type="evidence" value="ECO:0007669"/>
    <property type="project" value="UniProtKB-SubCell"/>
</dbReference>
<dbReference type="GO" id="GO:0052621">
    <property type="term" value="F:diguanylate cyclase activity"/>
    <property type="evidence" value="ECO:0007669"/>
    <property type="project" value="UniProtKB-EC"/>
</dbReference>
<dbReference type="GO" id="GO:0005525">
    <property type="term" value="F:GTP binding"/>
    <property type="evidence" value="ECO:0007669"/>
    <property type="project" value="UniProtKB-KW"/>
</dbReference>
<dbReference type="GO" id="GO:0046872">
    <property type="term" value="F:metal ion binding"/>
    <property type="evidence" value="ECO:0007669"/>
    <property type="project" value="UniProtKB-KW"/>
</dbReference>
<dbReference type="GO" id="GO:0043709">
    <property type="term" value="P:cell adhesion involved in single-species biofilm formation"/>
    <property type="evidence" value="ECO:0007669"/>
    <property type="project" value="TreeGrafter"/>
</dbReference>
<dbReference type="GO" id="GO:0030244">
    <property type="term" value="P:cellulose biosynthetic process"/>
    <property type="evidence" value="ECO:0007669"/>
    <property type="project" value="UniProtKB-KW"/>
</dbReference>
<dbReference type="GO" id="GO:1902201">
    <property type="term" value="P:negative regulation of bacterial-type flagellum-dependent cell motility"/>
    <property type="evidence" value="ECO:0007669"/>
    <property type="project" value="TreeGrafter"/>
</dbReference>
<dbReference type="CDD" id="cd01949">
    <property type="entry name" value="GGDEF"/>
    <property type="match status" value="1"/>
</dbReference>
<dbReference type="FunFam" id="3.30.70.270:FF:000001">
    <property type="entry name" value="Diguanylate cyclase domain protein"/>
    <property type="match status" value="1"/>
</dbReference>
<dbReference type="Gene3D" id="3.30.70.270">
    <property type="match status" value="1"/>
</dbReference>
<dbReference type="InterPro" id="IPR033416">
    <property type="entry name" value="CHASE7"/>
</dbReference>
<dbReference type="InterPro" id="IPR050469">
    <property type="entry name" value="Diguanylate_Cyclase"/>
</dbReference>
<dbReference type="InterPro" id="IPR000160">
    <property type="entry name" value="GGDEF_dom"/>
</dbReference>
<dbReference type="InterPro" id="IPR029787">
    <property type="entry name" value="Nucleotide_cyclase"/>
</dbReference>
<dbReference type="InterPro" id="IPR043128">
    <property type="entry name" value="Rev_trsase/Diguanyl_cyclase"/>
</dbReference>
<dbReference type="NCBIfam" id="TIGR00254">
    <property type="entry name" value="GGDEF"/>
    <property type="match status" value="1"/>
</dbReference>
<dbReference type="NCBIfam" id="NF011955">
    <property type="entry name" value="PRK15426.1"/>
    <property type="match status" value="1"/>
</dbReference>
<dbReference type="PANTHER" id="PTHR45138:SF16">
    <property type="entry name" value="DIGUANYLATE CYCLASE DGCQ-RELATED"/>
    <property type="match status" value="1"/>
</dbReference>
<dbReference type="PANTHER" id="PTHR45138">
    <property type="entry name" value="REGULATORY COMPONENTS OF SENSORY TRANSDUCTION SYSTEM"/>
    <property type="match status" value="1"/>
</dbReference>
<dbReference type="Pfam" id="PF17151">
    <property type="entry name" value="CHASE7"/>
    <property type="match status" value="1"/>
</dbReference>
<dbReference type="Pfam" id="PF00990">
    <property type="entry name" value="GGDEF"/>
    <property type="match status" value="1"/>
</dbReference>
<dbReference type="SMART" id="SM00267">
    <property type="entry name" value="GGDEF"/>
    <property type="match status" value="1"/>
</dbReference>
<dbReference type="SUPFAM" id="SSF55073">
    <property type="entry name" value="Nucleotide cyclase"/>
    <property type="match status" value="1"/>
</dbReference>
<dbReference type="PROSITE" id="PS50887">
    <property type="entry name" value="GGDEF"/>
    <property type="match status" value="1"/>
</dbReference>
<gene>
    <name evidence="2" type="primary">dgcQ</name>
    <name type="synonym">yedQ</name>
    <name type="ordered locus">SSON_2013</name>
</gene>
<keyword id="KW-0997">Cell inner membrane</keyword>
<keyword id="KW-1003">Cell membrane</keyword>
<keyword id="KW-0135">Cellulose biosynthesis</keyword>
<keyword id="KW-0342">GTP-binding</keyword>
<keyword id="KW-0460">Magnesium</keyword>
<keyword id="KW-0472">Membrane</keyword>
<keyword id="KW-0479">Metal-binding</keyword>
<keyword id="KW-0547">Nucleotide-binding</keyword>
<keyword id="KW-1185">Reference proteome</keyword>
<keyword id="KW-0808">Transferase</keyword>
<keyword id="KW-0812">Transmembrane</keyword>
<keyword id="KW-1133">Transmembrane helix</keyword>
<organism>
    <name type="scientific">Shigella sonnei (strain Ss046)</name>
    <dbReference type="NCBI Taxonomy" id="300269"/>
    <lineage>
        <taxon>Bacteria</taxon>
        <taxon>Pseudomonadati</taxon>
        <taxon>Pseudomonadota</taxon>
        <taxon>Gammaproteobacteria</taxon>
        <taxon>Enterobacterales</taxon>
        <taxon>Enterobacteriaceae</taxon>
        <taxon>Shigella</taxon>
    </lineage>
</organism>
<accession>Q3Z0N3</accession>